<protein>
    <recommendedName>
        <fullName evidence="9">E3 ubiquitin-protein ligase RNF25</fullName>
        <ecNumber evidence="7">2.3.2.27</ecNumber>
    </recommendedName>
    <alternativeName>
        <fullName evidence="9">RING finger protein 25</fullName>
    </alternativeName>
    <alternativeName>
        <fullName evidence="8">RING finger protein AO7</fullName>
    </alternativeName>
</protein>
<proteinExistence type="evidence at protein level"/>
<keyword id="KW-0963">Cytoplasm</keyword>
<keyword id="KW-0479">Metal-binding</keyword>
<keyword id="KW-1185">Reference proteome</keyword>
<keyword id="KW-0808">Transferase</keyword>
<keyword id="KW-0832">Ubl conjugation</keyword>
<keyword id="KW-0833">Ubl conjugation pathway</keyword>
<keyword id="KW-0862">Zinc</keyword>
<keyword id="KW-0863">Zinc-finger</keyword>
<sequence length="456" mass="51227">MAASASTAAGEEDWVLPSEVEVLESIYLDELQVMKGNGRSPWEIFITLHPATAEVQDSQFVCFTLVLRIPVQYPHEVPQISIRNPRGLSDEQIHKISQALGHVAKEGLGTAMLYELIEKGKEILTDNNIPHGQCVICLYGFQEKEAFTKTPCYHYFHCHCLARYIQHMEQELTTQEQEQERQHVVTKQKAVGVQCPVCREPLVYDLASLKAAPEPQQPMELYQPSAESLRQQEELKLLYQRQQEKGGIIDLEAERNRYFISLQQPPAALEPESAVDVSREPQPPNALSAEQSTSLADQSTLPTSLPMTTQYTYEKTSGAGPNQQRPGETQKSVLDPPRHGRGSWRQYDRRHPKGGECCTPKGTSEIHELPPPEKPLKETVDLKAEPRNKGLTGHPQEKGPGSWQGPSARRTRDCARWERSKNRTPGSCYPHLPRGQGAYRSGTRREPLGLESEEGS</sequence>
<gene>
    <name evidence="10" type="primary">Rnf25</name>
</gene>
<organism>
    <name type="scientific">Mus musculus</name>
    <name type="common">Mouse</name>
    <dbReference type="NCBI Taxonomy" id="10090"/>
    <lineage>
        <taxon>Eukaryota</taxon>
        <taxon>Metazoa</taxon>
        <taxon>Chordata</taxon>
        <taxon>Craniata</taxon>
        <taxon>Vertebrata</taxon>
        <taxon>Euteleostomi</taxon>
        <taxon>Mammalia</taxon>
        <taxon>Eutheria</taxon>
        <taxon>Euarchontoglires</taxon>
        <taxon>Glires</taxon>
        <taxon>Rodentia</taxon>
        <taxon>Myomorpha</taxon>
        <taxon>Muroidea</taxon>
        <taxon>Muridae</taxon>
        <taxon>Murinae</taxon>
        <taxon>Mus</taxon>
        <taxon>Mus</taxon>
    </lineage>
</organism>
<dbReference type="EC" id="2.3.2.27" evidence="7"/>
<dbReference type="EMBL" id="AF171060">
    <property type="protein sequence ID" value="AAD48057.1"/>
    <property type="molecule type" value="mRNA"/>
</dbReference>
<dbReference type="EMBL" id="AK002399">
    <property type="protein sequence ID" value="BAB22071.1"/>
    <property type="molecule type" value="mRNA"/>
</dbReference>
<dbReference type="EMBL" id="AK171752">
    <property type="protein sequence ID" value="BAE42650.1"/>
    <property type="molecule type" value="mRNA"/>
</dbReference>
<dbReference type="EMBL" id="BC022715">
    <property type="protein sequence ID" value="AAH22715.1"/>
    <property type="molecule type" value="mRNA"/>
</dbReference>
<dbReference type="EMBL" id="BC048821">
    <property type="protein sequence ID" value="AAH48821.1"/>
    <property type="molecule type" value="mRNA"/>
</dbReference>
<dbReference type="CCDS" id="CCDS15052.1"/>
<dbReference type="RefSeq" id="NP_001292159.1">
    <property type="nucleotide sequence ID" value="NM_001305230.1"/>
</dbReference>
<dbReference type="RefSeq" id="NP_067288.2">
    <property type="nucleotide sequence ID" value="NM_021313.3"/>
</dbReference>
<dbReference type="SMR" id="Q9QZR0"/>
<dbReference type="BioGRID" id="208313">
    <property type="interactions" value="5"/>
</dbReference>
<dbReference type="FunCoup" id="Q9QZR0">
    <property type="interactions" value="4060"/>
</dbReference>
<dbReference type="STRING" id="10090.ENSMUSP00000027357"/>
<dbReference type="iPTMnet" id="Q9QZR0"/>
<dbReference type="PhosphoSitePlus" id="Q9QZR0"/>
<dbReference type="SwissPalm" id="Q9QZR0"/>
<dbReference type="PaxDb" id="10090-ENSMUSP00000027357"/>
<dbReference type="ProteomicsDB" id="300457"/>
<dbReference type="Pumba" id="Q9QZR0"/>
<dbReference type="Antibodypedia" id="34282">
    <property type="antibodies" value="151 antibodies from 27 providers"/>
</dbReference>
<dbReference type="DNASU" id="57751"/>
<dbReference type="Ensembl" id="ENSMUST00000027357.12">
    <property type="protein sequence ID" value="ENSMUSP00000027357.6"/>
    <property type="gene ID" value="ENSMUSG00000026171.13"/>
</dbReference>
<dbReference type="GeneID" id="57751"/>
<dbReference type="KEGG" id="mmu:57751"/>
<dbReference type="UCSC" id="uc007bms.3">
    <property type="organism name" value="mouse"/>
</dbReference>
<dbReference type="AGR" id="MGI:1890215"/>
<dbReference type="CTD" id="64320"/>
<dbReference type="MGI" id="MGI:1890215">
    <property type="gene designation" value="Rnf25"/>
</dbReference>
<dbReference type="VEuPathDB" id="HostDB:ENSMUSG00000026171"/>
<dbReference type="eggNOG" id="KOG4445">
    <property type="taxonomic scope" value="Eukaryota"/>
</dbReference>
<dbReference type="GeneTree" id="ENSGT00390000001557"/>
<dbReference type="InParanoid" id="Q9QZR0"/>
<dbReference type="OMA" id="WEPWEIS"/>
<dbReference type="OrthoDB" id="432311at2759"/>
<dbReference type="PhylomeDB" id="Q9QZR0"/>
<dbReference type="TreeFam" id="TF324097"/>
<dbReference type="Reactome" id="R-MMU-983168">
    <property type="pathway name" value="Antigen processing: Ubiquitination &amp; Proteasome degradation"/>
</dbReference>
<dbReference type="UniPathway" id="UPA00143"/>
<dbReference type="BioGRID-ORCS" id="57751">
    <property type="hits" value="0 hits in 62 CRISPR screens"/>
</dbReference>
<dbReference type="PRO" id="PR:Q9QZR0"/>
<dbReference type="Proteomes" id="UP000000589">
    <property type="component" value="Chromosome 1"/>
</dbReference>
<dbReference type="RNAct" id="Q9QZR0">
    <property type="molecule type" value="protein"/>
</dbReference>
<dbReference type="Bgee" id="ENSMUSG00000026171">
    <property type="expression patterns" value="Expressed in retinal neural layer and 253 other cell types or tissues"/>
</dbReference>
<dbReference type="ExpressionAtlas" id="Q9QZR0">
    <property type="expression patterns" value="baseline and differential"/>
</dbReference>
<dbReference type="GO" id="GO:0005829">
    <property type="term" value="C:cytosol"/>
    <property type="evidence" value="ECO:0000250"/>
    <property type="project" value="UniProtKB"/>
</dbReference>
<dbReference type="GO" id="GO:0022626">
    <property type="term" value="C:cytosolic ribosome"/>
    <property type="evidence" value="ECO:0007669"/>
    <property type="project" value="Ensembl"/>
</dbReference>
<dbReference type="GO" id="GO:0005634">
    <property type="term" value="C:nucleus"/>
    <property type="evidence" value="ECO:0000250"/>
    <property type="project" value="UniProtKB"/>
</dbReference>
<dbReference type="GO" id="GO:0051059">
    <property type="term" value="F:NF-kappaB binding"/>
    <property type="evidence" value="ECO:0000250"/>
    <property type="project" value="UniProtKB"/>
</dbReference>
<dbReference type="GO" id="GO:0061630">
    <property type="term" value="F:ubiquitin protein ligase activity"/>
    <property type="evidence" value="ECO:0000314"/>
    <property type="project" value="MGI"/>
</dbReference>
<dbReference type="GO" id="GO:0004842">
    <property type="term" value="F:ubiquitin-protein transferase activity"/>
    <property type="evidence" value="ECO:0000314"/>
    <property type="project" value="UniProtKB"/>
</dbReference>
<dbReference type="GO" id="GO:0008270">
    <property type="term" value="F:zinc ion binding"/>
    <property type="evidence" value="ECO:0007669"/>
    <property type="project" value="UniProtKB-KW"/>
</dbReference>
<dbReference type="GO" id="GO:0051092">
    <property type="term" value="P:positive regulation of NF-kappaB transcription factor activity"/>
    <property type="evidence" value="ECO:0000250"/>
    <property type="project" value="UniProtKB"/>
</dbReference>
<dbReference type="GO" id="GO:0085020">
    <property type="term" value="P:protein K6-linked ubiquitination"/>
    <property type="evidence" value="ECO:0007669"/>
    <property type="project" value="Ensembl"/>
</dbReference>
<dbReference type="GO" id="GO:0016567">
    <property type="term" value="P:protein ubiquitination"/>
    <property type="evidence" value="ECO:0000314"/>
    <property type="project" value="UniProtKB"/>
</dbReference>
<dbReference type="GO" id="GO:0160127">
    <property type="term" value="P:protein-RNA covalent cross-linking repair"/>
    <property type="evidence" value="ECO:0007669"/>
    <property type="project" value="Ensembl"/>
</dbReference>
<dbReference type="GO" id="GO:0072344">
    <property type="term" value="P:rescue of stalled ribosome"/>
    <property type="evidence" value="ECO:0000250"/>
    <property type="project" value="UniProtKB"/>
</dbReference>
<dbReference type="GO" id="GO:0006511">
    <property type="term" value="P:ubiquitin-dependent protein catabolic process"/>
    <property type="evidence" value="ECO:0007669"/>
    <property type="project" value="Ensembl"/>
</dbReference>
<dbReference type="CDD" id="cd16470">
    <property type="entry name" value="RING-H2_RNF25"/>
    <property type="match status" value="1"/>
</dbReference>
<dbReference type="CDD" id="cd23818">
    <property type="entry name" value="RWD_RNF25"/>
    <property type="match status" value="1"/>
</dbReference>
<dbReference type="FunFam" id="3.30.40.10:FF:000215">
    <property type="entry name" value="E3 ubiquitin-protein ligase RNF25"/>
    <property type="match status" value="1"/>
</dbReference>
<dbReference type="FunFam" id="3.10.110.10:FF:000052">
    <property type="entry name" value="Putative e3 ubiquitin-protein ligase rnf25"/>
    <property type="match status" value="1"/>
</dbReference>
<dbReference type="Gene3D" id="3.10.110.10">
    <property type="entry name" value="Ubiquitin Conjugating Enzyme"/>
    <property type="match status" value="1"/>
</dbReference>
<dbReference type="Gene3D" id="3.30.40.10">
    <property type="entry name" value="Zinc/RING finger domain, C3HC4 (zinc finger)"/>
    <property type="match status" value="1"/>
</dbReference>
<dbReference type="InterPro" id="IPR039133">
    <property type="entry name" value="RNF25"/>
</dbReference>
<dbReference type="InterPro" id="IPR006575">
    <property type="entry name" value="RWD_dom"/>
</dbReference>
<dbReference type="InterPro" id="IPR016135">
    <property type="entry name" value="UBQ-conjugating_enzyme/RWD"/>
</dbReference>
<dbReference type="InterPro" id="IPR001841">
    <property type="entry name" value="Znf_RING"/>
</dbReference>
<dbReference type="InterPro" id="IPR013083">
    <property type="entry name" value="Znf_RING/FYVE/PHD"/>
</dbReference>
<dbReference type="PANTHER" id="PTHR13198:SF4">
    <property type="entry name" value="E3 UBIQUITIN-PROTEIN LIGASE RNF25"/>
    <property type="match status" value="1"/>
</dbReference>
<dbReference type="PANTHER" id="PTHR13198">
    <property type="entry name" value="RING FINGER PROTEIN 25"/>
    <property type="match status" value="1"/>
</dbReference>
<dbReference type="Pfam" id="PF05773">
    <property type="entry name" value="RWD"/>
    <property type="match status" value="1"/>
</dbReference>
<dbReference type="Pfam" id="PF13639">
    <property type="entry name" value="zf-RING_2"/>
    <property type="match status" value="1"/>
</dbReference>
<dbReference type="SMART" id="SM00184">
    <property type="entry name" value="RING"/>
    <property type="match status" value="1"/>
</dbReference>
<dbReference type="SMART" id="SM00591">
    <property type="entry name" value="RWD"/>
    <property type="match status" value="1"/>
</dbReference>
<dbReference type="SUPFAM" id="SSF57850">
    <property type="entry name" value="RING/U-box"/>
    <property type="match status" value="1"/>
</dbReference>
<dbReference type="SUPFAM" id="SSF54495">
    <property type="entry name" value="UBC-like"/>
    <property type="match status" value="1"/>
</dbReference>
<dbReference type="PROSITE" id="PS50908">
    <property type="entry name" value="RWD"/>
    <property type="match status" value="1"/>
</dbReference>
<dbReference type="PROSITE" id="PS50089">
    <property type="entry name" value="ZF_RING_2"/>
    <property type="match status" value="1"/>
</dbReference>
<accession>Q9QZR0</accession>
<accession>Q3TAL8</accession>
<accession>Q9DCW7</accession>
<name>RNF25_MOUSE</name>
<evidence type="ECO:0000250" key="1">
    <source>
        <dbReference type="UniProtKB" id="Q7SXJ6"/>
    </source>
</evidence>
<evidence type="ECO:0000250" key="2">
    <source>
        <dbReference type="UniProtKB" id="Q96BH1"/>
    </source>
</evidence>
<evidence type="ECO:0000255" key="3">
    <source>
        <dbReference type="PROSITE-ProRule" id="PRU00175"/>
    </source>
</evidence>
<evidence type="ECO:0000255" key="4">
    <source>
        <dbReference type="PROSITE-ProRule" id="PRU00179"/>
    </source>
</evidence>
<evidence type="ECO:0000256" key="5">
    <source>
        <dbReference type="SAM" id="MobiDB-lite"/>
    </source>
</evidence>
<evidence type="ECO:0000269" key="6">
    <source>
    </source>
</evidence>
<evidence type="ECO:0000269" key="7">
    <source>
    </source>
</evidence>
<evidence type="ECO:0000303" key="8">
    <source>
    </source>
</evidence>
<evidence type="ECO:0000305" key="9"/>
<evidence type="ECO:0000312" key="10">
    <source>
        <dbReference type="MGI" id="MGI:1890215"/>
    </source>
</evidence>
<comment type="function">
    <text evidence="2 6 7">E3 ubiquitin-protein ligase that plays a key role in the RNF14-RNF25 translation quality control pathway, a pathway that takes place when a ribosome has stalled during translation, and which promotes ubiquitination and degradation of translation factors on stalled ribosomes (By similarity). Catalyzes ubiquitination of RPS27A in response to ribosome collisions, promoting activation of RNF14 (By similarity). RNF25 catalyzes ubiquitination of other ribosomal proteins on stalled ribosomes, such as RPL0, RPL1, RPL12, RPS13 and RPS17 (By similarity). Also involved in ubiquitination and degradation of stalled ETF1/eRF1 (By similarity). Independently of its function in the response to stalled ribosomes, mediates ubiquitination and subsequent proteasomal degradation of NKD2 (PubMed:10500182, PubMed:18757723). May also stimulate transcription mediated by NF-kappa-B via its interaction with RELA/p65 (By similarity).</text>
</comment>
<comment type="catalytic activity">
    <reaction evidence="7">
        <text>S-ubiquitinyl-[E2 ubiquitin-conjugating enzyme]-L-cysteine + [acceptor protein]-L-lysine = [E2 ubiquitin-conjugating enzyme]-L-cysteine + N(6)-ubiquitinyl-[acceptor protein]-L-lysine.</text>
        <dbReference type="EC" id="2.3.2.27"/>
    </reaction>
</comment>
<comment type="pathway">
    <text evidence="6 7">Protein modification; protein ubiquitination.</text>
</comment>
<comment type="subunit">
    <text evidence="2 6">Interacts with UBE2D2, and may also interact with UBE2E1 and UBE2E3 (PubMed:10500182). Interacts with RELA/p65 (By similarity).</text>
</comment>
<comment type="subcellular location">
    <subcellularLocation>
        <location evidence="1">Cytoplasm</location>
    </subcellularLocation>
</comment>
<comment type="tissue specificity">
    <text evidence="6">Ubiquitous.</text>
</comment>
<comment type="PTM">
    <text evidence="2">Ubiquitinated; autoubiquitinated.</text>
</comment>
<comment type="similarity">
    <text evidence="9">Belongs to the RNF25 family.</text>
</comment>
<feature type="chain" id="PRO_0000056067" description="E3 ubiquitin-protein ligase RNF25">
    <location>
        <begin position="1"/>
        <end position="456"/>
    </location>
</feature>
<feature type="domain" description="RWD" evidence="4">
    <location>
        <begin position="18"/>
        <end position="127"/>
    </location>
</feature>
<feature type="zinc finger region" description="RING-type" evidence="3">
    <location>
        <begin position="134"/>
        <end position="199"/>
    </location>
</feature>
<feature type="region of interest" description="Disordered" evidence="5">
    <location>
        <begin position="269"/>
        <end position="456"/>
    </location>
</feature>
<feature type="compositionally biased region" description="Polar residues" evidence="5">
    <location>
        <begin position="288"/>
        <end position="332"/>
    </location>
</feature>
<feature type="compositionally biased region" description="Basic and acidic residues" evidence="5">
    <location>
        <begin position="364"/>
        <end position="388"/>
    </location>
</feature>
<feature type="compositionally biased region" description="Basic and acidic residues" evidence="5">
    <location>
        <begin position="410"/>
        <end position="421"/>
    </location>
</feature>
<feature type="binding site" evidence="2">
    <location>
        <position position="134"/>
    </location>
    <ligand>
        <name>Zn(2+)</name>
        <dbReference type="ChEBI" id="CHEBI:29105"/>
        <label>1</label>
    </ligand>
</feature>
<feature type="binding site" evidence="2">
    <location>
        <position position="137"/>
    </location>
    <ligand>
        <name>Zn(2+)</name>
        <dbReference type="ChEBI" id="CHEBI:29105"/>
        <label>1</label>
    </ligand>
</feature>
<feature type="binding site" evidence="2">
    <location>
        <position position="152"/>
    </location>
    <ligand>
        <name>Zn(2+)</name>
        <dbReference type="ChEBI" id="CHEBI:29105"/>
        <label>2</label>
    </ligand>
</feature>
<feature type="binding site" evidence="2">
    <location>
        <position position="154"/>
    </location>
    <ligand>
        <name>Zn(2+)</name>
        <dbReference type="ChEBI" id="CHEBI:29105"/>
        <label>2</label>
    </ligand>
</feature>
<feature type="binding site" evidence="2">
    <location>
        <position position="157"/>
    </location>
    <ligand>
        <name>Zn(2+)</name>
        <dbReference type="ChEBI" id="CHEBI:29105"/>
        <label>1</label>
    </ligand>
</feature>
<feature type="binding site" evidence="2">
    <location>
        <position position="160"/>
    </location>
    <ligand>
        <name>Zn(2+)</name>
        <dbReference type="ChEBI" id="CHEBI:29105"/>
        <label>1</label>
    </ligand>
</feature>
<feature type="binding site" evidence="2">
    <location>
        <position position="195"/>
    </location>
    <ligand>
        <name>Zn(2+)</name>
        <dbReference type="ChEBI" id="CHEBI:29105"/>
        <label>2</label>
    </ligand>
</feature>
<feature type="binding site" evidence="2">
    <location>
        <position position="198"/>
    </location>
    <ligand>
        <name>Zn(2+)</name>
        <dbReference type="ChEBI" id="CHEBI:29105"/>
        <label>2</label>
    </ligand>
</feature>
<feature type="mutagenesis site" description="No E2 binding. Loss of ubiquitination activity." evidence="6">
    <original>C</original>
    <variation>S</variation>
    <location>
        <position position="134"/>
    </location>
</feature>
<feature type="mutagenesis site" description="No E2 binding. Loss of ubiquitination activity." evidence="6">
    <original>C</original>
    <variation>S</variation>
    <location>
        <position position="137"/>
    </location>
</feature>
<feature type="mutagenesis site" description="No E2 binding. Loss of ubiquitination activity." evidence="6">
    <original>C</original>
    <variation>S</variation>
    <location>
        <position position="152"/>
    </location>
</feature>
<feature type="mutagenesis site" description="No E2 binding. Loss of ubiquitination activity." evidence="6">
    <original>H</original>
    <variation>C</variation>
    <location>
        <position position="157"/>
    </location>
</feature>
<feature type="mutagenesis site" description="No E2 binding. Loss of ubiquitination activity." evidence="6">
    <original>C</original>
    <variation>S</variation>
    <location>
        <position position="158"/>
    </location>
</feature>
<feature type="mutagenesis site" description="No E2 binding. Loss of ubiquitination activity." evidence="6">
    <original>C</original>
    <variation>S</variation>
    <location>
        <position position="160"/>
    </location>
</feature>
<feature type="sequence conflict" description="In Ref. 1; AAD48057." evidence="9" ref="1">
    <original>QH</original>
    <variation>HD</variation>
    <location>
        <begin position="182"/>
        <end position="183"/>
    </location>
</feature>
<feature type="sequence conflict" description="In Ref. 2; BAB22071." evidence="9" ref="2">
    <original>E</original>
    <variation>K</variation>
    <location>
        <position position="244"/>
    </location>
</feature>
<feature type="sequence conflict" description="In Ref. 2; BAB22071." evidence="9" ref="2">
    <original>R</original>
    <variation>G</variation>
    <location>
        <position position="445"/>
    </location>
</feature>
<reference key="1">
    <citation type="journal article" date="1999" name="Proc. Natl. Acad. Sci. U.S.A.">
        <title>RING fingers mediate ubiquitin-conjugating enzyme (E2)-dependent ubiquitination.</title>
        <authorList>
            <person name="Lorick K.L."/>
            <person name="Jensen J.P."/>
            <person name="Fang S."/>
            <person name="Ong A.M."/>
            <person name="Hatakeyama S."/>
            <person name="Weissman A.M."/>
        </authorList>
    </citation>
    <scope>NUCLEOTIDE SEQUENCE [MRNA]</scope>
    <scope>FUNCTION</scope>
    <scope>MUTAGENESIS OF CYS-134; CYS-137; CYS-152; HIS-157; CYS-158 AND CYS-160</scope>
    <scope>INTERACTION WITH UBE2D2; UBE2E1 AND UBE2E3</scope>
    <scope>UBIQUITINATION</scope>
    <scope>TISSUE SPECIFICITY</scope>
    <source>
        <tissue>T-cell lymphoma</tissue>
    </source>
</reference>
<reference key="2">
    <citation type="journal article" date="2005" name="Science">
        <title>The transcriptional landscape of the mammalian genome.</title>
        <authorList>
            <person name="Carninci P."/>
            <person name="Kasukawa T."/>
            <person name="Katayama S."/>
            <person name="Gough J."/>
            <person name="Frith M.C."/>
            <person name="Maeda N."/>
            <person name="Oyama R."/>
            <person name="Ravasi T."/>
            <person name="Lenhard B."/>
            <person name="Wells C."/>
            <person name="Kodzius R."/>
            <person name="Shimokawa K."/>
            <person name="Bajic V.B."/>
            <person name="Brenner S.E."/>
            <person name="Batalov S."/>
            <person name="Forrest A.R."/>
            <person name="Zavolan M."/>
            <person name="Davis M.J."/>
            <person name="Wilming L.G."/>
            <person name="Aidinis V."/>
            <person name="Allen J.E."/>
            <person name="Ambesi-Impiombato A."/>
            <person name="Apweiler R."/>
            <person name="Aturaliya R.N."/>
            <person name="Bailey T.L."/>
            <person name="Bansal M."/>
            <person name="Baxter L."/>
            <person name="Beisel K.W."/>
            <person name="Bersano T."/>
            <person name="Bono H."/>
            <person name="Chalk A.M."/>
            <person name="Chiu K.P."/>
            <person name="Choudhary V."/>
            <person name="Christoffels A."/>
            <person name="Clutterbuck D.R."/>
            <person name="Crowe M.L."/>
            <person name="Dalla E."/>
            <person name="Dalrymple B.P."/>
            <person name="de Bono B."/>
            <person name="Della Gatta G."/>
            <person name="di Bernardo D."/>
            <person name="Down T."/>
            <person name="Engstrom P."/>
            <person name="Fagiolini M."/>
            <person name="Faulkner G."/>
            <person name="Fletcher C.F."/>
            <person name="Fukushima T."/>
            <person name="Furuno M."/>
            <person name="Futaki S."/>
            <person name="Gariboldi M."/>
            <person name="Georgii-Hemming P."/>
            <person name="Gingeras T.R."/>
            <person name="Gojobori T."/>
            <person name="Green R.E."/>
            <person name="Gustincich S."/>
            <person name="Harbers M."/>
            <person name="Hayashi Y."/>
            <person name="Hensch T.K."/>
            <person name="Hirokawa N."/>
            <person name="Hill D."/>
            <person name="Huminiecki L."/>
            <person name="Iacono M."/>
            <person name="Ikeo K."/>
            <person name="Iwama A."/>
            <person name="Ishikawa T."/>
            <person name="Jakt M."/>
            <person name="Kanapin A."/>
            <person name="Katoh M."/>
            <person name="Kawasawa Y."/>
            <person name="Kelso J."/>
            <person name="Kitamura H."/>
            <person name="Kitano H."/>
            <person name="Kollias G."/>
            <person name="Krishnan S.P."/>
            <person name="Kruger A."/>
            <person name="Kummerfeld S.K."/>
            <person name="Kurochkin I.V."/>
            <person name="Lareau L.F."/>
            <person name="Lazarevic D."/>
            <person name="Lipovich L."/>
            <person name="Liu J."/>
            <person name="Liuni S."/>
            <person name="McWilliam S."/>
            <person name="Madan Babu M."/>
            <person name="Madera M."/>
            <person name="Marchionni L."/>
            <person name="Matsuda H."/>
            <person name="Matsuzawa S."/>
            <person name="Miki H."/>
            <person name="Mignone F."/>
            <person name="Miyake S."/>
            <person name="Morris K."/>
            <person name="Mottagui-Tabar S."/>
            <person name="Mulder N."/>
            <person name="Nakano N."/>
            <person name="Nakauchi H."/>
            <person name="Ng P."/>
            <person name="Nilsson R."/>
            <person name="Nishiguchi S."/>
            <person name="Nishikawa S."/>
            <person name="Nori F."/>
            <person name="Ohara O."/>
            <person name="Okazaki Y."/>
            <person name="Orlando V."/>
            <person name="Pang K.C."/>
            <person name="Pavan W.J."/>
            <person name="Pavesi G."/>
            <person name="Pesole G."/>
            <person name="Petrovsky N."/>
            <person name="Piazza S."/>
            <person name="Reed J."/>
            <person name="Reid J.F."/>
            <person name="Ring B.Z."/>
            <person name="Ringwald M."/>
            <person name="Rost B."/>
            <person name="Ruan Y."/>
            <person name="Salzberg S.L."/>
            <person name="Sandelin A."/>
            <person name="Schneider C."/>
            <person name="Schoenbach C."/>
            <person name="Sekiguchi K."/>
            <person name="Semple C.A."/>
            <person name="Seno S."/>
            <person name="Sessa L."/>
            <person name="Sheng Y."/>
            <person name="Shibata Y."/>
            <person name="Shimada H."/>
            <person name="Shimada K."/>
            <person name="Silva D."/>
            <person name="Sinclair B."/>
            <person name="Sperling S."/>
            <person name="Stupka E."/>
            <person name="Sugiura K."/>
            <person name="Sultana R."/>
            <person name="Takenaka Y."/>
            <person name="Taki K."/>
            <person name="Tammoja K."/>
            <person name="Tan S.L."/>
            <person name="Tang S."/>
            <person name="Taylor M.S."/>
            <person name="Tegner J."/>
            <person name="Teichmann S.A."/>
            <person name="Ueda H.R."/>
            <person name="van Nimwegen E."/>
            <person name="Verardo R."/>
            <person name="Wei C.L."/>
            <person name="Yagi K."/>
            <person name="Yamanishi H."/>
            <person name="Zabarovsky E."/>
            <person name="Zhu S."/>
            <person name="Zimmer A."/>
            <person name="Hide W."/>
            <person name="Bult C."/>
            <person name="Grimmond S.M."/>
            <person name="Teasdale R.D."/>
            <person name="Liu E.T."/>
            <person name="Brusic V."/>
            <person name="Quackenbush J."/>
            <person name="Wahlestedt C."/>
            <person name="Mattick J.S."/>
            <person name="Hume D.A."/>
            <person name="Kai C."/>
            <person name="Sasaki D."/>
            <person name="Tomaru Y."/>
            <person name="Fukuda S."/>
            <person name="Kanamori-Katayama M."/>
            <person name="Suzuki M."/>
            <person name="Aoki J."/>
            <person name="Arakawa T."/>
            <person name="Iida J."/>
            <person name="Imamura K."/>
            <person name="Itoh M."/>
            <person name="Kato T."/>
            <person name="Kawaji H."/>
            <person name="Kawagashira N."/>
            <person name="Kawashima T."/>
            <person name="Kojima M."/>
            <person name="Kondo S."/>
            <person name="Konno H."/>
            <person name="Nakano K."/>
            <person name="Ninomiya N."/>
            <person name="Nishio T."/>
            <person name="Okada M."/>
            <person name="Plessy C."/>
            <person name="Shibata K."/>
            <person name="Shiraki T."/>
            <person name="Suzuki S."/>
            <person name="Tagami M."/>
            <person name="Waki K."/>
            <person name="Watahiki A."/>
            <person name="Okamura-Oho Y."/>
            <person name="Suzuki H."/>
            <person name="Kawai J."/>
            <person name="Hayashizaki Y."/>
        </authorList>
    </citation>
    <scope>NUCLEOTIDE SEQUENCE [LARGE SCALE MRNA]</scope>
    <source>
        <strain>C57BL/6J</strain>
        <strain>NOD</strain>
        <tissue>Kidney</tissue>
        <tissue>Spleen</tissue>
    </source>
</reference>
<reference key="3">
    <citation type="journal article" date="2004" name="Genome Res.">
        <title>The status, quality, and expansion of the NIH full-length cDNA project: the Mammalian Gene Collection (MGC).</title>
        <authorList>
            <consortium name="The MGC Project Team"/>
        </authorList>
    </citation>
    <scope>NUCLEOTIDE SEQUENCE [LARGE SCALE MRNA]</scope>
    <source>
        <strain>FVB/N</strain>
        <tissue>Mammary tumor</tissue>
    </source>
</reference>
<reference key="4">
    <citation type="journal article" date="2008" name="Proc. Natl. Acad. Sci. U.S.A.">
        <title>EGF receptor-independent action of TGF-alpha protects Naked2 from AO7-mediated ubiquitylation and proteasomal degradation.</title>
        <authorList>
            <person name="Ding W."/>
            <person name="Li C."/>
            <person name="Hu T."/>
            <person name="Graves-Deal R."/>
            <person name="Fotia A.B."/>
            <person name="Weissman A.M."/>
            <person name="Coffey R.J."/>
        </authorList>
    </citation>
    <scope>FUNCTION</scope>
    <scope>CATALYTIC ACTIVITY</scope>
    <scope>INTERACTION WITH NKD2</scope>
</reference>
<reference key="5">
    <citation type="journal article" date="2010" name="Cell">
        <title>A tissue-specific atlas of mouse protein phosphorylation and expression.</title>
        <authorList>
            <person name="Huttlin E.L."/>
            <person name="Jedrychowski M.P."/>
            <person name="Elias J.E."/>
            <person name="Goswami T."/>
            <person name="Rad R."/>
            <person name="Beausoleil S.A."/>
            <person name="Villen J."/>
            <person name="Haas W."/>
            <person name="Sowa M.E."/>
            <person name="Gygi S.P."/>
        </authorList>
    </citation>
    <scope>IDENTIFICATION BY MASS SPECTROMETRY [LARGE SCALE ANALYSIS]</scope>
    <source>
        <tissue>Testis</tissue>
    </source>
</reference>